<keyword id="KW-0002">3D-structure</keyword>
<keyword id="KW-0877">Alternative promoter usage</keyword>
<keyword id="KW-0903">Direct protein sequencing</keyword>
<keyword id="KW-1035">Host cytoplasm</keyword>
<keyword id="KW-1048">Host nucleus</keyword>
<keyword id="KW-0378">Hydrolase</keyword>
<keyword id="KW-0597">Phosphoprotein</keyword>
<keyword id="KW-0645">Protease</keyword>
<keyword id="KW-1185">Reference proteome</keyword>
<keyword id="KW-0720">Serine protease</keyword>
<keyword id="KW-0118">Viral capsid assembly</keyword>
<keyword id="KW-1188">Viral release from host cell</keyword>
<name>SCAF_HHV11</name>
<feature type="chain" id="PRO_0000027244" description="Capsid scaffolding protein">
    <location>
        <begin position="1"/>
        <end position="635"/>
    </location>
</feature>
<feature type="chain" id="PRO_0000027245" description="Assemblin" evidence="2">
    <location>
        <begin position="1"/>
        <end position="247"/>
    </location>
</feature>
<feature type="chain" id="PRO_0000027246" description="Assembly protein" evidence="2">
    <location>
        <begin position="248"/>
        <end position="635"/>
    </location>
</feature>
<feature type="region of interest" description="Interaction with pAP" evidence="2">
    <location>
        <begin position="324"/>
        <end position="343"/>
    </location>
</feature>
<feature type="region of interest" description="Disordered" evidence="3">
    <location>
        <begin position="409"/>
        <end position="476"/>
    </location>
</feature>
<feature type="region of interest" description="Disordered" evidence="3">
    <location>
        <begin position="514"/>
        <end position="606"/>
    </location>
</feature>
<feature type="region of interest" description="Interaction with major capsid protein" evidence="2">
    <location>
        <begin position="615"/>
        <end position="635"/>
    </location>
</feature>
<feature type="short sequence motif" description="Nuclear localization signal" evidence="1">
    <location>
        <begin position="426"/>
        <end position="429"/>
    </location>
</feature>
<feature type="compositionally biased region" description="Low complexity" evidence="3">
    <location>
        <begin position="409"/>
        <end position="419"/>
    </location>
</feature>
<feature type="compositionally biased region" description="Pro residues" evidence="3">
    <location>
        <begin position="536"/>
        <end position="574"/>
    </location>
</feature>
<feature type="active site" description="Charge relay system" evidence="2">
    <location>
        <position position="61"/>
    </location>
</feature>
<feature type="active site" description="Charge relay system" evidence="2">
    <location>
        <position position="129"/>
    </location>
</feature>
<feature type="active site" description="Charge relay system" evidence="2">
    <location>
        <position position="148"/>
    </location>
</feature>
<feature type="site" description="Cleavage; by assemblin; Release site" evidence="2">
    <location>
        <begin position="247"/>
        <end position="248"/>
    </location>
</feature>
<feature type="site" description="Cleavage; by assemblin; Maturation site" evidence="2">
    <location>
        <begin position="610"/>
        <end position="611"/>
    </location>
</feature>
<feature type="splice variant" id="VSP_037414" description="In isoform pAP." evidence="4">
    <location>
        <begin position="1"/>
        <end position="306"/>
    </location>
</feature>
<reference key="1">
    <citation type="journal article" date="1988" name="J. Gen. Virol.">
        <title>The complete DNA sequence of the long unique region in the genome of herpes simplex virus type 1.</title>
        <authorList>
            <person name="McGeoch D.J."/>
            <person name="Dalrymple M.A."/>
            <person name="Davison A.J."/>
            <person name="Dolan A."/>
            <person name="Frame M.C."/>
            <person name="McNab D."/>
            <person name="Perry L.J."/>
            <person name="Scott J.E."/>
            <person name="Taylor P."/>
        </authorList>
    </citation>
    <scope>NUCLEOTIDE SEQUENCE [GENOMIC DNA]</scope>
</reference>
<reference key="2">
    <citation type="journal article" date="1992" name="J. Gen. Virol.">
        <title>Identification of genes encoding two capsid proteins (VP24 and VP26) of herpes simplex virus type 1.</title>
        <authorList>
            <person name="Davison M.D."/>
            <person name="Rixon F.J."/>
            <person name="Davison A.J."/>
        </authorList>
    </citation>
    <scope>PROTEIN SEQUENCE OF 11-29; 77-91 AND 223-241</scope>
</reference>
<comment type="function">
    <molecule>Capsid scaffolding protein</molecule>
    <text evidence="2">Acts as a scaffold protein by binding major capsid protein in the cytoplasm, inducing the nuclear localization of both proteins. Multimerizes in the nucleus such as major capsid protein forms the icosahedral T=16 capsid. Autocatalytic cleavage releases the assembly protein, and subsequently abolishes interaction with major capsid protein. Cleavages products are evicted from the capsid before or during DNA packaging.</text>
</comment>
<comment type="function">
    <molecule>Assemblin</molecule>
    <text evidence="2">Protease that plays an essential role in virion assembly within the nucleus. Catalyzes the cleavage of the assembly protein after formation of the spherical procapsid. By that cleavage, the capsid matures and gains its icosahedral shape. The cleavage sites seem to include -Ala-Ser-, -Ala-Ala-, as well as Ala-Thr bonds. Assemblin and cleavages products are evicted from the capsid before or during DNA packaging.</text>
</comment>
<comment type="function">
    <molecule>Assembly protein</molecule>
    <text evidence="2">Plays a major role in capsid assembly. Acts as a scaffold protein by binding major capsid protein. Multimerizes in the nucleus such as major capsid protein forms the icosahedral T=16 capsid. Cleaved by assemblin after capsid completion. The cleavages products are evicted from the capsid before or during DNA packaging.</text>
</comment>
<comment type="catalytic activity">
    <molecule>Assemblin</molecule>
    <reaction evidence="2">
        <text>Cleaves -Ala-|-Ser- and -Ala-|-Ala- bonds in the scaffold protein.</text>
        <dbReference type="EC" id="3.4.21.97"/>
    </reaction>
</comment>
<comment type="subunit">
    <molecule>Capsid scaffolding protein</molecule>
    <text evidence="2">Homomultimer. Interacts with major capsid protein.</text>
</comment>
<comment type="subunit">
    <molecule>Assemblin</molecule>
    <text evidence="2">Exists in a monomer-dimer equilibrium with the dimer being the active species.</text>
</comment>
<comment type="subunit">
    <molecule>Assembly protein</molecule>
    <text evidence="2">Homomultimer. Interacts with major capsid protein.</text>
</comment>
<comment type="interaction">
    <interactant intactId="EBI-8621986">
        <id>P10210</id>
    </interactant>
    <interactant intactId="EBI-7608705">
        <id>P06491</id>
        <label>MCP</label>
    </interactant>
    <organismsDiffer>false</organismsDiffer>
    <experiments>3</experiments>
</comment>
<comment type="interaction">
    <interactant intactId="EBI-8621986">
        <id>P10210</id>
    </interactant>
    <interactant intactId="EBI-8621986">
        <id>P10210</id>
        <label>UL26</label>
    </interactant>
    <organismsDiffer>false</organismsDiffer>
    <experiments>2</experiments>
</comment>
<comment type="subcellular location">
    <molecule>Capsid scaffolding protein</molecule>
    <subcellularLocation>
        <location evidence="2">Host cytoplasm</location>
    </subcellularLocation>
</comment>
<comment type="subcellular location">
    <molecule>Assemblin</molecule>
    <subcellularLocation>
        <location evidence="2">Host nucleus</location>
    </subcellularLocation>
</comment>
<comment type="subcellular location">
    <molecule>Assembly protein</molecule>
    <subcellularLocation>
        <location evidence="2">Host nucleus</location>
    </subcellularLocation>
</comment>
<comment type="alternative products">
    <event type="alternative promoter"/>
    <isoform>
        <id>P10210-1</id>
        <name>Capsid scaffolding protein</name>
        <name>pPR</name>
        <name>UL26</name>
        <sequence type="displayed"/>
    </isoform>
    <isoform>
        <id>P10210-2</id>
        <name>pAP</name>
        <name>Assembly protein</name>
        <name>UL26.5 protein</name>
        <sequence type="described" ref="VSP_037414"/>
    </isoform>
</comment>
<comment type="domain">
    <text evidence="2">Region of interaction between pPR and pAP is called Amino conserved domain (ACD). The region of interaction with major capsid protein is called carboxyl conserved domain (CCD).</text>
</comment>
<comment type="PTM">
    <molecule>Capsid scaffolding protein</molecule>
    <text evidence="2">Capsid scaffolding protein is cleaved by assemblin after formation of the spherical procapsid. As a result, the capsid obtains its mature, icosahedral shape. Cleavages occur at two or more sites: release (R-site) and maturation (M-site).</text>
</comment>
<comment type="similarity">
    <text evidence="2">Belongs to the herpesviridae capsid scaffolding protein family.</text>
</comment>
<protein>
    <recommendedName>
        <fullName evidence="2">Capsid scaffolding protein</fullName>
    </recommendedName>
    <alternativeName>
        <fullName>Capsid protein P40</fullName>
    </alternativeName>
    <alternativeName>
        <fullName evidence="2">Protease precursor</fullName>
        <shortName evidence="2">pPR</shortName>
    </alternativeName>
    <alternativeName>
        <fullName>Virion structural protein UL26</fullName>
    </alternativeName>
    <component>
        <recommendedName>
            <fullName evidence="2">Assemblin</fullName>
            <ecNumber evidence="2">3.4.21.97</ecNumber>
        </recommendedName>
        <alternativeName>
            <fullName evidence="2">Protease</fullName>
            <shortName evidence="2">Pr</shortName>
        </alternativeName>
    </component>
    <component>
        <recommendedName>
            <fullName evidence="2">Assembly protein</fullName>
            <shortName evidence="2">AP</shortName>
        </recommendedName>
        <alternativeName>
            <fullName evidence="2">Capsid assembly protein</fullName>
        </alternativeName>
    </component>
</protein>
<dbReference type="EC" id="3.4.21.97" evidence="2"/>
<dbReference type="EMBL" id="X14112">
    <property type="protein sequence ID" value="CAA32318.1"/>
    <property type="molecule type" value="Genomic_DNA"/>
</dbReference>
<dbReference type="EMBL" id="X14112">
    <property type="protein sequence ID" value="CAA32319.1"/>
    <property type="molecule type" value="Genomic_DNA"/>
</dbReference>
<dbReference type="PIR" id="H30084">
    <property type="entry name" value="WMBEW6"/>
</dbReference>
<dbReference type="PDB" id="8BQ1">
    <property type="method" value="X-ray"/>
    <property type="resolution" value="2.32 A"/>
    <property type="chains" value="A=1-247"/>
</dbReference>
<dbReference type="PDBsum" id="8BQ1"/>
<dbReference type="SMR" id="P10210"/>
<dbReference type="BioGRID" id="971467">
    <property type="interactions" value="1"/>
</dbReference>
<dbReference type="DIP" id="DIP-1096N"/>
<dbReference type="IntAct" id="P10210">
    <property type="interactions" value="1"/>
</dbReference>
<dbReference type="MINT" id="P10210"/>
<dbReference type="BindingDB" id="P10210"/>
<dbReference type="ChEMBL" id="CHEMBL3518"/>
<dbReference type="DrugCentral" id="P10210"/>
<dbReference type="MEROPS" id="S21.001"/>
<dbReference type="Proteomes" id="UP000009294">
    <property type="component" value="Segment"/>
</dbReference>
<dbReference type="GO" id="GO:0030430">
    <property type="term" value="C:host cell cytoplasm"/>
    <property type="evidence" value="ECO:0007669"/>
    <property type="project" value="UniProtKB-SubCell"/>
</dbReference>
<dbReference type="GO" id="GO:0042025">
    <property type="term" value="C:host cell nucleus"/>
    <property type="evidence" value="ECO:0000314"/>
    <property type="project" value="CAFA"/>
</dbReference>
<dbReference type="GO" id="GO:0042802">
    <property type="term" value="F:identical protein binding"/>
    <property type="evidence" value="ECO:0000353"/>
    <property type="project" value="IntAct"/>
</dbReference>
<dbReference type="GO" id="GO:0004252">
    <property type="term" value="F:serine-type endopeptidase activity"/>
    <property type="evidence" value="ECO:0007669"/>
    <property type="project" value="UniProtKB-UniRule"/>
</dbReference>
<dbReference type="GO" id="GO:0039708">
    <property type="term" value="P:nuclear capsid assembly"/>
    <property type="evidence" value="ECO:0000314"/>
    <property type="project" value="UniProtKB"/>
</dbReference>
<dbReference type="GO" id="GO:0006508">
    <property type="term" value="P:proteolysis"/>
    <property type="evidence" value="ECO:0007669"/>
    <property type="project" value="UniProtKB-KW"/>
</dbReference>
<dbReference type="GO" id="GO:0019076">
    <property type="term" value="P:viral release from host cell"/>
    <property type="evidence" value="ECO:0007669"/>
    <property type="project" value="UniProtKB-UniRule"/>
</dbReference>
<dbReference type="FunFam" id="3.20.16.10:FF:000001">
    <property type="entry name" value="Capsid scaffolding protein"/>
    <property type="match status" value="1"/>
</dbReference>
<dbReference type="Gene3D" id="3.20.16.10">
    <property type="entry name" value="Herpesvirus/Caudovirus protease domain"/>
    <property type="match status" value="1"/>
</dbReference>
<dbReference type="HAMAP" id="MF_04008">
    <property type="entry name" value="HSV_SCAF"/>
    <property type="match status" value="1"/>
</dbReference>
<dbReference type="InterPro" id="IPR035443">
    <property type="entry name" value="Herpes_virus_sf"/>
</dbReference>
<dbReference type="InterPro" id="IPR001847">
    <property type="entry name" value="Peptidase_S21"/>
</dbReference>
<dbReference type="Pfam" id="PF00716">
    <property type="entry name" value="Peptidase_S21"/>
    <property type="match status" value="1"/>
</dbReference>
<dbReference type="PRINTS" id="PR00236">
    <property type="entry name" value="HSVCAPSIDP40"/>
</dbReference>
<dbReference type="SUPFAM" id="SSF50789">
    <property type="entry name" value="Herpes virus serine proteinase, assemblin"/>
    <property type="match status" value="1"/>
</dbReference>
<proteinExistence type="evidence at protein level"/>
<accession>P10210</accession>
<accession>O09798</accession>
<organism>
    <name type="scientific">Human herpesvirus 1 (strain 17)</name>
    <name type="common">HHV-1</name>
    <name type="synonym">Human herpes simplex virus 1</name>
    <dbReference type="NCBI Taxonomy" id="10299"/>
    <lineage>
        <taxon>Viruses</taxon>
        <taxon>Duplodnaviria</taxon>
        <taxon>Heunggongvirae</taxon>
        <taxon>Peploviricota</taxon>
        <taxon>Herviviricetes</taxon>
        <taxon>Herpesvirales</taxon>
        <taxon>Orthoherpesviridae</taxon>
        <taxon>Alphaherpesvirinae</taxon>
        <taxon>Simplexvirus</taxon>
        <taxon>Simplexvirus humanalpha1</taxon>
        <taxon>Human herpesvirus 1</taxon>
    </lineage>
</organism>
<organismHost>
    <name type="scientific">Homo sapiens</name>
    <name type="common">Human</name>
    <dbReference type="NCBI Taxonomy" id="9606"/>
</organismHost>
<sequence>MAADAPGDRMEEPLPDRAVPIYVAGFLALYDSGDSGELALDPDTVRAALPPDNPLPINVDHRAGCEVGRVLAVVDDPRGPFFVGLIACVQLERVLETAASAAIFERRGPPLSREERLLYLITNYLPSVSLATKRLGGEAHPDRTLFAHVALCAIGRRLGTIVTYDTGLDAAIAPFRHLSPASREGARRLAAEAELALSGRTWAPGVEALTHTLLSTAVNNMMLRDRWSLVAERRRQAGIAGHTYLQASEKFKMWGAEPVSAPARGYKNGAPESTDIPPGSIAAAPQGDRCPIVRQRGVALSPVLPPMNPVPTSGTPAPAPPGDGSYLWIPASHYNQLVAGHAAPQPQPHSAFGFPAAAGSVAYGPHGAGLSQHYPPHVAHQYPGVLFSGPSPLEAQIAALVGAIAADRQAGGQPAAGDPGVRGSGKRRRYEAGPSESYCDQDEPDADYPYYPGEARGAPRGVDSRRAARHSPGTNETITALMGAVTSLQQELAHMRARTSAPYGMYTPVAHYRPQVGEPEPTTTHPALCPPEAVYRPPPHSAPYGPPQGPASHAPTPPYAPAACPPGPPPPPCPSTQTRAPLPTEPAFPPAATGSQPEASNAEAGALVNASSAAHVDVDTARAADLFVSQMMGAR</sequence>
<evidence type="ECO:0000250" key="1"/>
<evidence type="ECO:0000255" key="2">
    <source>
        <dbReference type="HAMAP-Rule" id="MF_04008"/>
    </source>
</evidence>
<evidence type="ECO:0000256" key="3">
    <source>
        <dbReference type="SAM" id="MobiDB-lite"/>
    </source>
</evidence>
<evidence type="ECO:0000305" key="4"/>
<gene>
    <name type="primary">UL26</name>
</gene>